<organism>
    <name type="scientific">Photobacterium profundum (strain SS9)</name>
    <dbReference type="NCBI Taxonomy" id="298386"/>
    <lineage>
        <taxon>Bacteria</taxon>
        <taxon>Pseudomonadati</taxon>
        <taxon>Pseudomonadota</taxon>
        <taxon>Gammaproteobacteria</taxon>
        <taxon>Vibrionales</taxon>
        <taxon>Vibrionaceae</taxon>
        <taxon>Photobacterium</taxon>
    </lineage>
</organism>
<feature type="chain" id="PRO_0000232008" description="Phenylalanine--tRNA ligase alpha subunit">
    <location>
        <begin position="1"/>
        <end position="327"/>
    </location>
</feature>
<feature type="binding site" evidence="1">
    <location>
        <position position="252"/>
    </location>
    <ligand>
        <name>Mg(2+)</name>
        <dbReference type="ChEBI" id="CHEBI:18420"/>
        <note>shared with beta subunit</note>
    </ligand>
</feature>
<dbReference type="EC" id="6.1.1.20" evidence="1"/>
<dbReference type="EMBL" id="CR378670">
    <property type="protein sequence ID" value="CAG20554.1"/>
    <property type="status" value="ALT_INIT"/>
    <property type="molecule type" value="Genomic_DNA"/>
</dbReference>
<dbReference type="RefSeq" id="WP_011218846.1">
    <property type="nucleotide sequence ID" value="NC_006370.1"/>
</dbReference>
<dbReference type="SMR" id="Q6LQ72"/>
<dbReference type="STRING" id="298386.PBPRA2156"/>
<dbReference type="KEGG" id="ppr:PBPRA2156"/>
<dbReference type="eggNOG" id="COG0016">
    <property type="taxonomic scope" value="Bacteria"/>
</dbReference>
<dbReference type="HOGENOM" id="CLU_025086_0_1_6"/>
<dbReference type="Proteomes" id="UP000000593">
    <property type="component" value="Chromosome 1"/>
</dbReference>
<dbReference type="GO" id="GO:0005737">
    <property type="term" value="C:cytoplasm"/>
    <property type="evidence" value="ECO:0007669"/>
    <property type="project" value="UniProtKB-SubCell"/>
</dbReference>
<dbReference type="GO" id="GO:0005524">
    <property type="term" value="F:ATP binding"/>
    <property type="evidence" value="ECO:0007669"/>
    <property type="project" value="UniProtKB-UniRule"/>
</dbReference>
<dbReference type="GO" id="GO:0000287">
    <property type="term" value="F:magnesium ion binding"/>
    <property type="evidence" value="ECO:0007669"/>
    <property type="project" value="UniProtKB-UniRule"/>
</dbReference>
<dbReference type="GO" id="GO:0004826">
    <property type="term" value="F:phenylalanine-tRNA ligase activity"/>
    <property type="evidence" value="ECO:0007669"/>
    <property type="project" value="UniProtKB-UniRule"/>
</dbReference>
<dbReference type="GO" id="GO:0000049">
    <property type="term" value="F:tRNA binding"/>
    <property type="evidence" value="ECO:0007669"/>
    <property type="project" value="InterPro"/>
</dbReference>
<dbReference type="GO" id="GO:0006432">
    <property type="term" value="P:phenylalanyl-tRNA aminoacylation"/>
    <property type="evidence" value="ECO:0007669"/>
    <property type="project" value="UniProtKB-UniRule"/>
</dbReference>
<dbReference type="CDD" id="cd00496">
    <property type="entry name" value="PheRS_alpha_core"/>
    <property type="match status" value="1"/>
</dbReference>
<dbReference type="FunFam" id="3.30.930.10:FF:000003">
    <property type="entry name" value="Phenylalanine--tRNA ligase alpha subunit"/>
    <property type="match status" value="1"/>
</dbReference>
<dbReference type="Gene3D" id="3.30.930.10">
    <property type="entry name" value="Bira Bifunctional Protein, Domain 2"/>
    <property type="match status" value="1"/>
</dbReference>
<dbReference type="HAMAP" id="MF_00281">
    <property type="entry name" value="Phe_tRNA_synth_alpha1"/>
    <property type="match status" value="1"/>
</dbReference>
<dbReference type="InterPro" id="IPR006195">
    <property type="entry name" value="aa-tRNA-synth_II"/>
</dbReference>
<dbReference type="InterPro" id="IPR045864">
    <property type="entry name" value="aa-tRNA-synth_II/BPL/LPL"/>
</dbReference>
<dbReference type="InterPro" id="IPR004529">
    <property type="entry name" value="Phe-tRNA-synth_IIc_asu"/>
</dbReference>
<dbReference type="InterPro" id="IPR004188">
    <property type="entry name" value="Phe-tRNA_ligase_II_N"/>
</dbReference>
<dbReference type="InterPro" id="IPR022911">
    <property type="entry name" value="Phe_tRNA_ligase_alpha1_bac"/>
</dbReference>
<dbReference type="InterPro" id="IPR002319">
    <property type="entry name" value="Phenylalanyl-tRNA_Synthase"/>
</dbReference>
<dbReference type="InterPro" id="IPR010978">
    <property type="entry name" value="tRNA-bd_arm"/>
</dbReference>
<dbReference type="NCBIfam" id="TIGR00468">
    <property type="entry name" value="pheS"/>
    <property type="match status" value="1"/>
</dbReference>
<dbReference type="PANTHER" id="PTHR11538:SF41">
    <property type="entry name" value="PHENYLALANINE--TRNA LIGASE, MITOCHONDRIAL"/>
    <property type="match status" value="1"/>
</dbReference>
<dbReference type="PANTHER" id="PTHR11538">
    <property type="entry name" value="PHENYLALANYL-TRNA SYNTHETASE"/>
    <property type="match status" value="1"/>
</dbReference>
<dbReference type="Pfam" id="PF02912">
    <property type="entry name" value="Phe_tRNA-synt_N"/>
    <property type="match status" value="1"/>
</dbReference>
<dbReference type="Pfam" id="PF01409">
    <property type="entry name" value="tRNA-synt_2d"/>
    <property type="match status" value="1"/>
</dbReference>
<dbReference type="SUPFAM" id="SSF55681">
    <property type="entry name" value="Class II aaRS and biotin synthetases"/>
    <property type="match status" value="1"/>
</dbReference>
<dbReference type="SUPFAM" id="SSF46589">
    <property type="entry name" value="tRNA-binding arm"/>
    <property type="match status" value="1"/>
</dbReference>
<dbReference type="PROSITE" id="PS50862">
    <property type="entry name" value="AA_TRNA_LIGASE_II"/>
    <property type="match status" value="1"/>
</dbReference>
<gene>
    <name evidence="1" type="primary">pheS</name>
    <name type="ordered locus">PBPRA2156</name>
</gene>
<sequence>MLQLDEILANATTAIETAASLVALDEVRVQYLGKKGELTSQLQSLGKLPPEERRTAGQEINKAKGAVQQAIAARKDALQRAELETKLAAETIDVSLPGRRIENGGLHPVTRTVERIEQFFGELGFSTESGPEIEDAFHNFDALNIADDHPARTDHDTFFFNPDLMLRTHTSGVQIRTMEHGKPPFRFIAPGRVYRNDYDQTHTPMFHQVEGMLVDENVNFAQLKGILNEFLCNFFEEEVEVRFRPSFFPFTEPSAEVDVKRKDGKWLEVLGCGMVHPNVLRSVGIDPEKYSGFAFGMGVERLTMLRYGVNDLRSFFENDLRFLKQFK</sequence>
<accession>Q6LQ72</accession>
<reference key="1">
    <citation type="journal article" date="2005" name="Science">
        <title>Life at depth: Photobacterium profundum genome sequence and expression analysis.</title>
        <authorList>
            <person name="Vezzi A."/>
            <person name="Campanaro S."/>
            <person name="D'Angelo M."/>
            <person name="Simonato F."/>
            <person name="Vitulo N."/>
            <person name="Lauro F.M."/>
            <person name="Cestaro A."/>
            <person name="Malacrida G."/>
            <person name="Simionati B."/>
            <person name="Cannata N."/>
            <person name="Romualdi C."/>
            <person name="Bartlett D.H."/>
            <person name="Valle G."/>
        </authorList>
    </citation>
    <scope>NUCLEOTIDE SEQUENCE [LARGE SCALE GENOMIC DNA]</scope>
    <source>
        <strain>ATCC BAA-1253 / SS9</strain>
    </source>
</reference>
<evidence type="ECO:0000255" key="1">
    <source>
        <dbReference type="HAMAP-Rule" id="MF_00281"/>
    </source>
</evidence>
<evidence type="ECO:0000305" key="2"/>
<comment type="catalytic activity">
    <reaction evidence="1">
        <text>tRNA(Phe) + L-phenylalanine + ATP = L-phenylalanyl-tRNA(Phe) + AMP + diphosphate + H(+)</text>
        <dbReference type="Rhea" id="RHEA:19413"/>
        <dbReference type="Rhea" id="RHEA-COMP:9668"/>
        <dbReference type="Rhea" id="RHEA-COMP:9699"/>
        <dbReference type="ChEBI" id="CHEBI:15378"/>
        <dbReference type="ChEBI" id="CHEBI:30616"/>
        <dbReference type="ChEBI" id="CHEBI:33019"/>
        <dbReference type="ChEBI" id="CHEBI:58095"/>
        <dbReference type="ChEBI" id="CHEBI:78442"/>
        <dbReference type="ChEBI" id="CHEBI:78531"/>
        <dbReference type="ChEBI" id="CHEBI:456215"/>
        <dbReference type="EC" id="6.1.1.20"/>
    </reaction>
</comment>
<comment type="cofactor">
    <cofactor evidence="1">
        <name>Mg(2+)</name>
        <dbReference type="ChEBI" id="CHEBI:18420"/>
    </cofactor>
    <text evidence="1">Binds 2 magnesium ions per tetramer.</text>
</comment>
<comment type="subunit">
    <text evidence="1">Tetramer of two alpha and two beta subunits.</text>
</comment>
<comment type="subcellular location">
    <subcellularLocation>
        <location evidence="1">Cytoplasm</location>
    </subcellularLocation>
</comment>
<comment type="similarity">
    <text evidence="1">Belongs to the class-II aminoacyl-tRNA synthetase family. Phe-tRNA synthetase alpha subunit type 1 subfamily.</text>
</comment>
<comment type="sequence caution" evidence="2">
    <conflict type="erroneous initiation">
        <sequence resource="EMBL-CDS" id="CAG20554"/>
    </conflict>
</comment>
<keyword id="KW-0030">Aminoacyl-tRNA synthetase</keyword>
<keyword id="KW-0067">ATP-binding</keyword>
<keyword id="KW-0963">Cytoplasm</keyword>
<keyword id="KW-0436">Ligase</keyword>
<keyword id="KW-0460">Magnesium</keyword>
<keyword id="KW-0479">Metal-binding</keyword>
<keyword id="KW-0547">Nucleotide-binding</keyword>
<keyword id="KW-0648">Protein biosynthesis</keyword>
<keyword id="KW-1185">Reference proteome</keyword>
<name>SYFA_PHOPR</name>
<protein>
    <recommendedName>
        <fullName evidence="1">Phenylalanine--tRNA ligase alpha subunit</fullName>
        <ecNumber evidence="1">6.1.1.20</ecNumber>
    </recommendedName>
    <alternativeName>
        <fullName evidence="1">Phenylalanyl-tRNA synthetase alpha subunit</fullName>
        <shortName evidence="1">PheRS</shortName>
    </alternativeName>
</protein>
<proteinExistence type="inferred from homology"/>